<accession>A2BNH4</accession>
<keyword id="KW-0067">ATP-binding</keyword>
<keyword id="KW-0963">Cytoplasm</keyword>
<keyword id="KW-0418">Kinase</keyword>
<keyword id="KW-0460">Magnesium</keyword>
<keyword id="KW-0479">Metal-binding</keyword>
<keyword id="KW-0546">Nucleotide metabolism</keyword>
<keyword id="KW-0547">Nucleotide-binding</keyword>
<keyword id="KW-0597">Phosphoprotein</keyword>
<keyword id="KW-0808">Transferase</keyword>
<sequence>MTKERTFIAIKPDGVQRGYVSEILGRFEKKGFKLVGLKQLIPSKELAQNHYGVHRERPFFGDLVDFISSGPVVAMVWEGEGVILSARKLIGATKPLEAEPGTIRGDLAIDIGRNIIHGSDGEDTAKFEINLWFNEEELCEWETSDSKWRSEN</sequence>
<organism>
    <name type="scientific">Prochlorococcus marinus (strain AS9601)</name>
    <dbReference type="NCBI Taxonomy" id="146891"/>
    <lineage>
        <taxon>Bacteria</taxon>
        <taxon>Bacillati</taxon>
        <taxon>Cyanobacteriota</taxon>
        <taxon>Cyanophyceae</taxon>
        <taxon>Synechococcales</taxon>
        <taxon>Prochlorococcaceae</taxon>
        <taxon>Prochlorococcus</taxon>
    </lineage>
</organism>
<comment type="function">
    <text evidence="1">Major role in the synthesis of nucleoside triphosphates other than ATP. The ATP gamma phosphate is transferred to the NDP beta phosphate via a ping-pong mechanism, using a phosphorylated active-site intermediate.</text>
</comment>
<comment type="catalytic activity">
    <reaction evidence="1">
        <text>a 2'-deoxyribonucleoside 5'-diphosphate + ATP = a 2'-deoxyribonucleoside 5'-triphosphate + ADP</text>
        <dbReference type="Rhea" id="RHEA:44640"/>
        <dbReference type="ChEBI" id="CHEBI:30616"/>
        <dbReference type="ChEBI" id="CHEBI:61560"/>
        <dbReference type="ChEBI" id="CHEBI:73316"/>
        <dbReference type="ChEBI" id="CHEBI:456216"/>
        <dbReference type="EC" id="2.7.4.6"/>
    </reaction>
</comment>
<comment type="catalytic activity">
    <reaction evidence="1">
        <text>a ribonucleoside 5'-diphosphate + ATP = a ribonucleoside 5'-triphosphate + ADP</text>
        <dbReference type="Rhea" id="RHEA:18113"/>
        <dbReference type="ChEBI" id="CHEBI:30616"/>
        <dbReference type="ChEBI" id="CHEBI:57930"/>
        <dbReference type="ChEBI" id="CHEBI:61557"/>
        <dbReference type="ChEBI" id="CHEBI:456216"/>
        <dbReference type="EC" id="2.7.4.6"/>
    </reaction>
</comment>
<comment type="cofactor">
    <cofactor evidence="1">
        <name>Mg(2+)</name>
        <dbReference type="ChEBI" id="CHEBI:18420"/>
    </cofactor>
</comment>
<comment type="subunit">
    <text evidence="1">Homotetramer.</text>
</comment>
<comment type="subcellular location">
    <subcellularLocation>
        <location evidence="1">Cytoplasm</location>
    </subcellularLocation>
</comment>
<comment type="similarity">
    <text evidence="1">Belongs to the NDK family.</text>
</comment>
<proteinExistence type="inferred from homology"/>
<dbReference type="EC" id="2.7.4.6" evidence="1"/>
<dbReference type="EMBL" id="CP000551">
    <property type="protein sequence ID" value="ABM69335.1"/>
    <property type="molecule type" value="Genomic_DNA"/>
</dbReference>
<dbReference type="RefSeq" id="WP_011817525.1">
    <property type="nucleotide sequence ID" value="NC_008816.1"/>
</dbReference>
<dbReference type="SMR" id="A2BNH4"/>
<dbReference type="STRING" id="146891.A9601_00471"/>
<dbReference type="KEGG" id="pmb:A9601_00471"/>
<dbReference type="eggNOG" id="COG0105">
    <property type="taxonomic scope" value="Bacteria"/>
</dbReference>
<dbReference type="HOGENOM" id="CLU_060216_6_3_3"/>
<dbReference type="OrthoDB" id="9801161at2"/>
<dbReference type="Proteomes" id="UP000002590">
    <property type="component" value="Chromosome"/>
</dbReference>
<dbReference type="GO" id="GO:0005737">
    <property type="term" value="C:cytoplasm"/>
    <property type="evidence" value="ECO:0007669"/>
    <property type="project" value="UniProtKB-SubCell"/>
</dbReference>
<dbReference type="GO" id="GO:0005524">
    <property type="term" value="F:ATP binding"/>
    <property type="evidence" value="ECO:0007669"/>
    <property type="project" value="UniProtKB-UniRule"/>
</dbReference>
<dbReference type="GO" id="GO:0046872">
    <property type="term" value="F:metal ion binding"/>
    <property type="evidence" value="ECO:0007669"/>
    <property type="project" value="UniProtKB-KW"/>
</dbReference>
<dbReference type="GO" id="GO:0004550">
    <property type="term" value="F:nucleoside diphosphate kinase activity"/>
    <property type="evidence" value="ECO:0007669"/>
    <property type="project" value="UniProtKB-UniRule"/>
</dbReference>
<dbReference type="GO" id="GO:0006241">
    <property type="term" value="P:CTP biosynthetic process"/>
    <property type="evidence" value="ECO:0007669"/>
    <property type="project" value="UniProtKB-UniRule"/>
</dbReference>
<dbReference type="GO" id="GO:0006183">
    <property type="term" value="P:GTP biosynthetic process"/>
    <property type="evidence" value="ECO:0007669"/>
    <property type="project" value="UniProtKB-UniRule"/>
</dbReference>
<dbReference type="GO" id="GO:0006228">
    <property type="term" value="P:UTP biosynthetic process"/>
    <property type="evidence" value="ECO:0007669"/>
    <property type="project" value="UniProtKB-UniRule"/>
</dbReference>
<dbReference type="CDD" id="cd04413">
    <property type="entry name" value="NDPk_I"/>
    <property type="match status" value="1"/>
</dbReference>
<dbReference type="FunFam" id="3.30.70.141:FF:000002">
    <property type="entry name" value="Nucleoside diphosphate kinase"/>
    <property type="match status" value="1"/>
</dbReference>
<dbReference type="Gene3D" id="3.30.70.141">
    <property type="entry name" value="Nucleoside diphosphate kinase-like domain"/>
    <property type="match status" value="1"/>
</dbReference>
<dbReference type="HAMAP" id="MF_00451">
    <property type="entry name" value="NDP_kinase"/>
    <property type="match status" value="1"/>
</dbReference>
<dbReference type="InterPro" id="IPR034907">
    <property type="entry name" value="NDK-like_dom"/>
</dbReference>
<dbReference type="InterPro" id="IPR036850">
    <property type="entry name" value="NDK-like_dom_sf"/>
</dbReference>
<dbReference type="InterPro" id="IPR001564">
    <property type="entry name" value="Nucleoside_diP_kinase"/>
</dbReference>
<dbReference type="InterPro" id="IPR023005">
    <property type="entry name" value="Nucleoside_diP_kinase_AS"/>
</dbReference>
<dbReference type="NCBIfam" id="NF001908">
    <property type="entry name" value="PRK00668.1"/>
    <property type="match status" value="1"/>
</dbReference>
<dbReference type="PANTHER" id="PTHR11349">
    <property type="entry name" value="NUCLEOSIDE DIPHOSPHATE KINASE"/>
    <property type="match status" value="1"/>
</dbReference>
<dbReference type="Pfam" id="PF00334">
    <property type="entry name" value="NDK"/>
    <property type="match status" value="1"/>
</dbReference>
<dbReference type="PRINTS" id="PR01243">
    <property type="entry name" value="NUCDPKINASE"/>
</dbReference>
<dbReference type="SMART" id="SM00562">
    <property type="entry name" value="NDK"/>
    <property type="match status" value="1"/>
</dbReference>
<dbReference type="SUPFAM" id="SSF54919">
    <property type="entry name" value="Nucleoside diphosphate kinase, NDK"/>
    <property type="match status" value="1"/>
</dbReference>
<dbReference type="PROSITE" id="PS00469">
    <property type="entry name" value="NDPK"/>
    <property type="match status" value="1"/>
</dbReference>
<dbReference type="PROSITE" id="PS51374">
    <property type="entry name" value="NDPK_LIKE"/>
    <property type="match status" value="1"/>
</dbReference>
<name>NDK_PROMS</name>
<gene>
    <name evidence="1" type="primary">ndk</name>
    <name type="ordered locus">A9601_00471</name>
</gene>
<protein>
    <recommendedName>
        <fullName evidence="1">Nucleoside diphosphate kinase</fullName>
        <shortName evidence="1">NDK</shortName>
        <shortName evidence="1">NDP kinase</shortName>
        <ecNumber evidence="1">2.7.4.6</ecNumber>
    </recommendedName>
    <alternativeName>
        <fullName evidence="1">Nucleoside-2-P kinase</fullName>
    </alternativeName>
</protein>
<reference key="1">
    <citation type="journal article" date="2007" name="PLoS Genet.">
        <title>Patterns and implications of gene gain and loss in the evolution of Prochlorococcus.</title>
        <authorList>
            <person name="Kettler G.C."/>
            <person name="Martiny A.C."/>
            <person name="Huang K."/>
            <person name="Zucker J."/>
            <person name="Coleman M.L."/>
            <person name="Rodrigue S."/>
            <person name="Chen F."/>
            <person name="Lapidus A."/>
            <person name="Ferriera S."/>
            <person name="Johnson J."/>
            <person name="Steglich C."/>
            <person name="Church G.M."/>
            <person name="Richardson P."/>
            <person name="Chisholm S.W."/>
        </authorList>
    </citation>
    <scope>NUCLEOTIDE SEQUENCE [LARGE SCALE GENOMIC DNA]</scope>
    <source>
        <strain>AS9601</strain>
    </source>
</reference>
<feature type="chain" id="PRO_1000026273" description="Nucleoside diphosphate kinase">
    <location>
        <begin position="1"/>
        <end position="152"/>
    </location>
</feature>
<feature type="active site" description="Pros-phosphohistidine intermediate" evidence="1">
    <location>
        <position position="117"/>
    </location>
</feature>
<feature type="binding site" evidence="1">
    <location>
        <position position="11"/>
    </location>
    <ligand>
        <name>ATP</name>
        <dbReference type="ChEBI" id="CHEBI:30616"/>
    </ligand>
</feature>
<feature type="binding site" evidence="1">
    <location>
        <position position="59"/>
    </location>
    <ligand>
        <name>ATP</name>
        <dbReference type="ChEBI" id="CHEBI:30616"/>
    </ligand>
</feature>
<feature type="binding site" evidence="1">
    <location>
        <position position="87"/>
    </location>
    <ligand>
        <name>ATP</name>
        <dbReference type="ChEBI" id="CHEBI:30616"/>
    </ligand>
</feature>
<feature type="binding site" evidence="1">
    <location>
        <position position="93"/>
    </location>
    <ligand>
        <name>ATP</name>
        <dbReference type="ChEBI" id="CHEBI:30616"/>
    </ligand>
</feature>
<feature type="binding site" evidence="1">
    <location>
        <position position="104"/>
    </location>
    <ligand>
        <name>ATP</name>
        <dbReference type="ChEBI" id="CHEBI:30616"/>
    </ligand>
</feature>
<feature type="binding site" evidence="1">
    <location>
        <position position="114"/>
    </location>
    <ligand>
        <name>ATP</name>
        <dbReference type="ChEBI" id="CHEBI:30616"/>
    </ligand>
</feature>
<evidence type="ECO:0000255" key="1">
    <source>
        <dbReference type="HAMAP-Rule" id="MF_00451"/>
    </source>
</evidence>